<feature type="chain" id="PRO_0000324324" description="Migration and invasion-inhibitory protein">
    <location>
        <begin position="1"/>
        <end position="389"/>
    </location>
</feature>
<feature type="region of interest" description="Disordered" evidence="2">
    <location>
        <begin position="44"/>
        <end position="80"/>
    </location>
</feature>
<feature type="region of interest" description="Disordered" evidence="2">
    <location>
        <begin position="131"/>
        <end position="150"/>
    </location>
</feature>
<feature type="compositionally biased region" description="Low complexity" evidence="2">
    <location>
        <begin position="44"/>
        <end position="54"/>
    </location>
</feature>
<feature type="compositionally biased region" description="Polar residues" evidence="2">
    <location>
        <begin position="58"/>
        <end position="70"/>
    </location>
</feature>
<feature type="compositionally biased region" description="Basic and acidic residues" evidence="2">
    <location>
        <begin position="71"/>
        <end position="80"/>
    </location>
</feature>
<feature type="modified residue" description="Phosphoserine" evidence="4">
    <location>
        <position position="309"/>
    </location>
</feature>
<comment type="function">
    <text evidence="1">Inhibits glioma cells invasion and down-regulates adhesion- and motility-associated genes such as NFKB2 and ICAM1. Exhibits opposing effects to IGFBP2 on cell invasion (By similarity).</text>
</comment>
<comment type="subunit">
    <text evidence="1">Interacts with IGFBP2.</text>
</comment>
<comment type="caution">
    <text evidence="3">It is uncertain whether Met-1 or Met-4 is the initiator.</text>
</comment>
<comment type="sequence caution" evidence="3">
    <conflict type="erroneous initiation">
        <sequence resource="EMBL-CDS" id="AAH79047"/>
    </conflict>
</comment>
<name>MIIP_RAT</name>
<reference key="1">
    <citation type="journal article" date="2004" name="Genome Res.">
        <title>The status, quality, and expansion of the NIH full-length cDNA project: the Mammalian Gene Collection (MGC).</title>
        <authorList>
            <consortium name="The MGC Project Team"/>
        </authorList>
    </citation>
    <scope>NUCLEOTIDE SEQUENCE [LARGE SCALE MRNA]</scope>
    <source>
        <tissue>Testis</tissue>
    </source>
</reference>
<reference key="2">
    <citation type="journal article" date="2012" name="Nat. Commun.">
        <title>Quantitative maps of protein phosphorylation sites across 14 different rat organs and tissues.</title>
        <authorList>
            <person name="Lundby A."/>
            <person name="Secher A."/>
            <person name="Lage K."/>
            <person name="Nordsborg N.B."/>
            <person name="Dmytriyev A."/>
            <person name="Lundby C."/>
            <person name="Olsen J.V."/>
        </authorList>
    </citation>
    <scope>PHOSPHORYLATION [LARGE SCALE ANALYSIS] AT SER-309</scope>
    <scope>IDENTIFICATION BY MASS SPECTROMETRY [LARGE SCALE ANALYSIS]</scope>
</reference>
<keyword id="KW-0597">Phosphoprotein</keyword>
<keyword id="KW-1185">Reference proteome</keyword>
<accession>Q6AYH0</accession>
<dbReference type="EMBL" id="BC079047">
    <property type="protein sequence ID" value="AAH79047.1"/>
    <property type="status" value="ALT_INIT"/>
    <property type="molecule type" value="mRNA"/>
</dbReference>
<dbReference type="RefSeq" id="NP_001017450.1">
    <property type="nucleotide sequence ID" value="NM_001017450.1"/>
</dbReference>
<dbReference type="RefSeq" id="XP_006239441.1">
    <property type="nucleotide sequence ID" value="XM_006239379.4"/>
</dbReference>
<dbReference type="RefSeq" id="XP_006239442.1">
    <property type="nucleotide sequence ID" value="XM_006239380.5"/>
</dbReference>
<dbReference type="RefSeq" id="XP_006239443.1">
    <property type="nucleotide sequence ID" value="XM_006239381.4"/>
</dbReference>
<dbReference type="RefSeq" id="XP_006239468.1">
    <property type="nucleotide sequence ID" value="XM_006239406.3"/>
</dbReference>
<dbReference type="RefSeq" id="XP_006239469.1">
    <property type="nucleotide sequence ID" value="XM_006239407.3"/>
</dbReference>
<dbReference type="RefSeq" id="XP_006239470.1">
    <property type="nucleotide sequence ID" value="XM_006239408.2"/>
</dbReference>
<dbReference type="RefSeq" id="XP_006239471.1">
    <property type="nucleotide sequence ID" value="XM_006239409.2"/>
</dbReference>
<dbReference type="RefSeq" id="XP_038965623.1">
    <property type="nucleotide sequence ID" value="XM_039109695.2"/>
</dbReference>
<dbReference type="FunCoup" id="Q6AYH0">
    <property type="interactions" value="234"/>
</dbReference>
<dbReference type="STRING" id="10116.ENSRNOP00000032889"/>
<dbReference type="iPTMnet" id="Q6AYH0"/>
<dbReference type="PhosphoSitePlus" id="Q6AYH0"/>
<dbReference type="PaxDb" id="10116-ENSRNOP00000032889"/>
<dbReference type="Ensembl" id="ENSRNOT00000035695.6">
    <property type="protein sequence ID" value="ENSRNOP00000032889.3"/>
    <property type="gene ID" value="ENSRNOG00000024139.7"/>
</dbReference>
<dbReference type="GeneID" id="298643"/>
<dbReference type="KEGG" id="rno:298643"/>
<dbReference type="UCSC" id="RGD:1587376">
    <property type="organism name" value="rat"/>
</dbReference>
<dbReference type="AGR" id="RGD:1587376"/>
<dbReference type="CTD" id="60672"/>
<dbReference type="RGD" id="1587376">
    <property type="gene designation" value="Miip"/>
</dbReference>
<dbReference type="eggNOG" id="ENOG502RZQ8">
    <property type="taxonomic scope" value="Eukaryota"/>
</dbReference>
<dbReference type="GeneTree" id="ENSGT00390000003768"/>
<dbReference type="HOGENOM" id="CLU_061576_0_0_1"/>
<dbReference type="InParanoid" id="Q6AYH0"/>
<dbReference type="OMA" id="PTPIWSV"/>
<dbReference type="OrthoDB" id="10002384at2759"/>
<dbReference type="PhylomeDB" id="Q6AYH0"/>
<dbReference type="TreeFam" id="TF335829"/>
<dbReference type="PRO" id="PR:Q6AYH0"/>
<dbReference type="Proteomes" id="UP000002494">
    <property type="component" value="Chromosome 5"/>
</dbReference>
<dbReference type="Bgee" id="ENSRNOG00000024139">
    <property type="expression patterns" value="Expressed in testis and 19 other cell types or tissues"/>
</dbReference>
<dbReference type="ExpressionAtlas" id="Q6AYH0">
    <property type="expression patterns" value="baseline"/>
</dbReference>
<dbReference type="GO" id="GO:0030336">
    <property type="term" value="P:negative regulation of cell migration"/>
    <property type="evidence" value="ECO:0007669"/>
    <property type="project" value="InterPro"/>
</dbReference>
<dbReference type="GO" id="GO:0010972">
    <property type="term" value="P:negative regulation of G2/M transition of mitotic cell cycle"/>
    <property type="evidence" value="ECO:0007669"/>
    <property type="project" value="InterPro"/>
</dbReference>
<dbReference type="InterPro" id="IPR031466">
    <property type="entry name" value="MIIP"/>
</dbReference>
<dbReference type="PANTHER" id="PTHR34831">
    <property type="entry name" value="MIGRATION AND INVASION-INHIBITORY PROTEIN"/>
    <property type="match status" value="1"/>
</dbReference>
<dbReference type="PANTHER" id="PTHR34831:SF1">
    <property type="entry name" value="MIGRATION AND INVASION-INHIBITORY PROTEIN"/>
    <property type="match status" value="1"/>
</dbReference>
<dbReference type="Pfam" id="PF15734">
    <property type="entry name" value="MIIP"/>
    <property type="match status" value="1"/>
</dbReference>
<organism>
    <name type="scientific">Rattus norvegicus</name>
    <name type="common">Rat</name>
    <dbReference type="NCBI Taxonomy" id="10116"/>
    <lineage>
        <taxon>Eukaryota</taxon>
        <taxon>Metazoa</taxon>
        <taxon>Chordata</taxon>
        <taxon>Craniata</taxon>
        <taxon>Vertebrata</taxon>
        <taxon>Euteleostomi</taxon>
        <taxon>Mammalia</taxon>
        <taxon>Eutheria</taxon>
        <taxon>Euarchontoglires</taxon>
        <taxon>Glires</taxon>
        <taxon>Rodentia</taxon>
        <taxon>Myomorpha</taxon>
        <taxon>Muroidea</taxon>
        <taxon>Muridae</taxon>
        <taxon>Murinae</taxon>
        <taxon>Rattus</taxon>
    </lineage>
</organism>
<evidence type="ECO:0000250" key="1"/>
<evidence type="ECO:0000256" key="2">
    <source>
        <dbReference type="SAM" id="MobiDB-lite"/>
    </source>
</evidence>
<evidence type="ECO:0000305" key="3"/>
<evidence type="ECO:0007744" key="4">
    <source>
    </source>
</evidence>
<protein>
    <recommendedName>
        <fullName>Migration and invasion-inhibitory protein</fullName>
    </recommendedName>
    <alternativeName>
        <fullName>Invasion-inhibitory protein 45</fullName>
        <shortName>IIp45</shortName>
    </alternativeName>
</protein>
<gene>
    <name type="primary">Miip</name>
    <name type="synonym">Iip45</name>
</gene>
<sequence length="389" mass="43339">MTNMAETKDTVQLRLLSLELLKQLWAGHEAMCQSVTRAASESNLDYSSSSNNLEMPLSQETSASSVAPNSQDKRHVWDPLDSHRGDTYDVAWYGKVNSRVDSLPPATCQHQEPQEGLRPSSVPLLATEGLKRPVSLGGPKGLGPDKAQVPRSLPLRLGKLSKPKVTFSQESSVPESSWYSRPCLDYDWTAGSLDSSSPVSSESEAYFSMLQRFREDNREDCVCNSPEAVFPELQESSGVEEDHECVYCYRINRRLFPEPLDPGAPCCLCGIPRDEQGPQTLVEPVQVRVSIPLSIMDPPHQYRIHRRKSFDASDTFALPRHCLLGWDILPPKSEKTSVPKSLDLWSSVSHGAAQRRNLSATNPSYQALRSRVPPPFWSEPQVARLCPSH</sequence>
<proteinExistence type="evidence at protein level"/>